<name>RPOB_RICPU</name>
<sequence length="1373" mass="154302">MVSLRDNIEAQPLSHNRRIRKNFGHINLVADIPNLIEIQKNSYEKNFLQLNIKDSERKNKGLQSILNSIFPISDSSNIANLEFVKYEFDTTKYDVEECSQRSLSYAAPLKVTLRLSIWDIDEDTGTREIKGIKEQEVYMGDIPLMTKNGTFIINGTERVVVSQMHRSPGVFFYHDEGKVHSSGKLLYSARVIPYRGSWLDLEFDAKDVIYFRIDRKRKLYTTTLLRAIGMSTEEIIKFYYNSVTYKLVKNKGWAVKFIPQHITAHRLTSDLVDADTGNILLKAGQKITPRLAKKYFGEGLNNILVAHETLIGKYLSEDLRDPASDEVLAKIGEMITADMLNVINDLKIKNVNVLVINPQSGPYIRNTLFADKNQDREAALCDIFRVLRPGEPVNIEAAESLFYNLFFDTERYDLSEVGRIKMNSRLELNISEEVTVLTIDDIKNIVRVLVELKDGKGIIDDIDHLGNRRVRSVGELIENQFRIGLVRMEKSVIERMSAGDVDTVMPHDLVNSKILVAVVKEFFSTSQLSQFMDQTNPLSEITHKRRLSALGPGGLSRDRAGFEVRDVHPTHYGRICPIETPEGQNIGLINSMATYARINKHGFIESPYRRVKDGCVTDEVVYLSAIEEGKYKIGQANSKINKDGKLQGEFINCRVEGGNFVMVEPYEVDFIDVTPMQVVSVAASLIPFLENDDANRALMGSNMQRQAVPLIKTDAPFVGTGVEGVVAKDSGASVLALHDGIVEQVDSNRIVIRILEQKVDGSPSVDIYNLLKFQKSNHNTCINQKPLVKVGHYVKKNDIIADGPSTDNGEIALGRNVLVAFLPWNGYNFEDSILISERIVKEDVFTSIHIEEFEVIARDTRLGPEEITRDIPNVSEEALRHLDEVGIIYIGAEVQAGDILVGKVTPKSESPITPEEKLLRAIFGEKAFDVKDSSLHVPSGVNGTVVEVRVFSRRGVEKDQRAIAIEKQQIEKFAKDRDDELEIIEHFVFSWLEKLLVGQVIINGPKQATVGQTITTEMLKGLSKGQFWQITVEDANVMNEIEQIKTHYDEKKEALDKRFATKVEKLQSGDDLPQGALKVVKVFIATKHKLQPGDKMAGRHGNKGVISRIVPEEDMPFLEDGTVVDIVLNPLGLPSRMNIGQILETHLGWASINLAKKISTLVKEYKNKHIGIEQIKKFLIELYGENINSILERPEEEIIAFCKKVSKGVHFATPVFDGAKVQDVKDMLKLAGQDPSGQVKLIDGRTGEYFDRLVTVGQKYLLKLHHLVDNKIHSRSIGPYSLVTQQPLGGKSHFGGQRFGEMECWALQAYGAAYTLQEMLTVKSDDVNGRIKTYDSIVRGENNFESGIPESFNVMIKEFRSLCLNVKLEVTSS</sequence>
<accession>C4K1N9</accession>
<protein>
    <recommendedName>
        <fullName evidence="1">DNA-directed RNA polymerase subunit beta</fullName>
        <shortName evidence="1">RNAP subunit beta</shortName>
        <ecNumber evidence="1">2.7.7.6</ecNumber>
    </recommendedName>
    <alternativeName>
        <fullName evidence="1">RNA polymerase subunit beta</fullName>
    </alternativeName>
    <alternativeName>
        <fullName evidence="1">Transcriptase subunit beta</fullName>
    </alternativeName>
</protein>
<comment type="function">
    <text evidence="1">DNA-dependent RNA polymerase catalyzes the transcription of DNA into RNA using the four ribonucleoside triphosphates as substrates.</text>
</comment>
<comment type="catalytic activity">
    <reaction evidence="1">
        <text>RNA(n) + a ribonucleoside 5'-triphosphate = RNA(n+1) + diphosphate</text>
        <dbReference type="Rhea" id="RHEA:21248"/>
        <dbReference type="Rhea" id="RHEA-COMP:14527"/>
        <dbReference type="Rhea" id="RHEA-COMP:17342"/>
        <dbReference type="ChEBI" id="CHEBI:33019"/>
        <dbReference type="ChEBI" id="CHEBI:61557"/>
        <dbReference type="ChEBI" id="CHEBI:140395"/>
        <dbReference type="EC" id="2.7.7.6"/>
    </reaction>
</comment>
<comment type="subunit">
    <text evidence="1">The RNAP catalytic core consists of 2 alpha, 1 beta, 1 beta' and 1 omega subunit. When a sigma factor is associated with the core the holoenzyme is formed, which can initiate transcription.</text>
</comment>
<comment type="similarity">
    <text evidence="1">Belongs to the RNA polymerase beta chain family.</text>
</comment>
<organism>
    <name type="scientific">Rickettsia peacockii (strain Rustic)</name>
    <dbReference type="NCBI Taxonomy" id="562019"/>
    <lineage>
        <taxon>Bacteria</taxon>
        <taxon>Pseudomonadati</taxon>
        <taxon>Pseudomonadota</taxon>
        <taxon>Alphaproteobacteria</taxon>
        <taxon>Rickettsiales</taxon>
        <taxon>Rickettsiaceae</taxon>
        <taxon>Rickettsieae</taxon>
        <taxon>Rickettsia</taxon>
        <taxon>spotted fever group</taxon>
    </lineage>
</organism>
<dbReference type="EC" id="2.7.7.6" evidence="1"/>
<dbReference type="EMBL" id="CP001227">
    <property type="protein sequence ID" value="ACR47489.1"/>
    <property type="molecule type" value="Genomic_DNA"/>
</dbReference>
<dbReference type="RefSeq" id="WP_012736724.1">
    <property type="nucleotide sequence ID" value="NC_012730.1"/>
</dbReference>
<dbReference type="SMR" id="C4K1N9"/>
<dbReference type="KEGG" id="rpk:RPR_03955"/>
<dbReference type="HOGENOM" id="CLU_000524_4_1_5"/>
<dbReference type="Proteomes" id="UP000005015">
    <property type="component" value="Chromosome"/>
</dbReference>
<dbReference type="GO" id="GO:0000428">
    <property type="term" value="C:DNA-directed RNA polymerase complex"/>
    <property type="evidence" value="ECO:0007669"/>
    <property type="project" value="UniProtKB-KW"/>
</dbReference>
<dbReference type="GO" id="GO:0003677">
    <property type="term" value="F:DNA binding"/>
    <property type="evidence" value="ECO:0007669"/>
    <property type="project" value="UniProtKB-UniRule"/>
</dbReference>
<dbReference type="GO" id="GO:0003899">
    <property type="term" value="F:DNA-directed RNA polymerase activity"/>
    <property type="evidence" value="ECO:0007669"/>
    <property type="project" value="UniProtKB-UniRule"/>
</dbReference>
<dbReference type="GO" id="GO:0032549">
    <property type="term" value="F:ribonucleoside binding"/>
    <property type="evidence" value="ECO:0007669"/>
    <property type="project" value="InterPro"/>
</dbReference>
<dbReference type="GO" id="GO:0006351">
    <property type="term" value="P:DNA-templated transcription"/>
    <property type="evidence" value="ECO:0007669"/>
    <property type="project" value="UniProtKB-UniRule"/>
</dbReference>
<dbReference type="CDD" id="cd00653">
    <property type="entry name" value="RNA_pol_B_RPB2"/>
    <property type="match status" value="1"/>
</dbReference>
<dbReference type="Gene3D" id="2.40.50.100">
    <property type="match status" value="1"/>
</dbReference>
<dbReference type="Gene3D" id="2.40.50.150">
    <property type="match status" value="1"/>
</dbReference>
<dbReference type="Gene3D" id="3.90.1100.10">
    <property type="match status" value="2"/>
</dbReference>
<dbReference type="Gene3D" id="2.30.150.10">
    <property type="entry name" value="DNA-directed RNA polymerase, beta subunit, external 1 domain"/>
    <property type="match status" value="1"/>
</dbReference>
<dbReference type="Gene3D" id="2.40.270.10">
    <property type="entry name" value="DNA-directed RNA polymerase, subunit 2, domain 6"/>
    <property type="match status" value="2"/>
</dbReference>
<dbReference type="Gene3D" id="3.90.1800.10">
    <property type="entry name" value="RNA polymerase alpha subunit dimerisation domain"/>
    <property type="match status" value="1"/>
</dbReference>
<dbReference type="Gene3D" id="3.90.1110.10">
    <property type="entry name" value="RNA polymerase Rpb2, domain 2"/>
    <property type="match status" value="2"/>
</dbReference>
<dbReference type="HAMAP" id="MF_01321">
    <property type="entry name" value="RNApol_bact_RpoB"/>
    <property type="match status" value="1"/>
</dbReference>
<dbReference type="InterPro" id="IPR042107">
    <property type="entry name" value="DNA-dir_RNA_pol_bsu_ext_1_sf"/>
</dbReference>
<dbReference type="InterPro" id="IPR019462">
    <property type="entry name" value="DNA-dir_RNA_pol_bsu_external_1"/>
</dbReference>
<dbReference type="InterPro" id="IPR015712">
    <property type="entry name" value="DNA-dir_RNA_pol_su2"/>
</dbReference>
<dbReference type="InterPro" id="IPR007120">
    <property type="entry name" value="DNA-dir_RNAP_su2_dom"/>
</dbReference>
<dbReference type="InterPro" id="IPR037033">
    <property type="entry name" value="DNA-dir_RNAP_su2_hyb_sf"/>
</dbReference>
<dbReference type="InterPro" id="IPR010243">
    <property type="entry name" value="RNA_pol_bsu_bac"/>
</dbReference>
<dbReference type="InterPro" id="IPR007121">
    <property type="entry name" value="RNA_pol_bsu_CS"/>
</dbReference>
<dbReference type="InterPro" id="IPR007644">
    <property type="entry name" value="RNA_pol_bsu_protrusion"/>
</dbReference>
<dbReference type="InterPro" id="IPR007642">
    <property type="entry name" value="RNA_pol_Rpb2_2"/>
</dbReference>
<dbReference type="InterPro" id="IPR037034">
    <property type="entry name" value="RNA_pol_Rpb2_2_sf"/>
</dbReference>
<dbReference type="InterPro" id="IPR007645">
    <property type="entry name" value="RNA_pol_Rpb2_3"/>
</dbReference>
<dbReference type="InterPro" id="IPR007641">
    <property type="entry name" value="RNA_pol_Rpb2_7"/>
</dbReference>
<dbReference type="InterPro" id="IPR014724">
    <property type="entry name" value="RNA_pol_RPB2_OB-fold"/>
</dbReference>
<dbReference type="NCBIfam" id="NF001616">
    <property type="entry name" value="PRK00405.1"/>
    <property type="match status" value="1"/>
</dbReference>
<dbReference type="NCBIfam" id="TIGR02013">
    <property type="entry name" value="rpoB"/>
    <property type="match status" value="1"/>
</dbReference>
<dbReference type="PANTHER" id="PTHR20856">
    <property type="entry name" value="DNA-DIRECTED RNA POLYMERASE I SUBUNIT 2"/>
    <property type="match status" value="1"/>
</dbReference>
<dbReference type="Pfam" id="PF04563">
    <property type="entry name" value="RNA_pol_Rpb2_1"/>
    <property type="match status" value="1"/>
</dbReference>
<dbReference type="Pfam" id="PF04561">
    <property type="entry name" value="RNA_pol_Rpb2_2"/>
    <property type="match status" value="1"/>
</dbReference>
<dbReference type="Pfam" id="PF04565">
    <property type="entry name" value="RNA_pol_Rpb2_3"/>
    <property type="match status" value="1"/>
</dbReference>
<dbReference type="Pfam" id="PF10385">
    <property type="entry name" value="RNA_pol_Rpb2_45"/>
    <property type="match status" value="1"/>
</dbReference>
<dbReference type="Pfam" id="PF00562">
    <property type="entry name" value="RNA_pol_Rpb2_6"/>
    <property type="match status" value="1"/>
</dbReference>
<dbReference type="Pfam" id="PF04560">
    <property type="entry name" value="RNA_pol_Rpb2_7"/>
    <property type="match status" value="1"/>
</dbReference>
<dbReference type="SUPFAM" id="SSF64484">
    <property type="entry name" value="beta and beta-prime subunits of DNA dependent RNA-polymerase"/>
    <property type="match status" value="1"/>
</dbReference>
<dbReference type="PROSITE" id="PS01166">
    <property type="entry name" value="RNA_POL_BETA"/>
    <property type="match status" value="1"/>
</dbReference>
<proteinExistence type="inferred from homology"/>
<keyword id="KW-0240">DNA-directed RNA polymerase</keyword>
<keyword id="KW-0548">Nucleotidyltransferase</keyword>
<keyword id="KW-0804">Transcription</keyword>
<keyword id="KW-0808">Transferase</keyword>
<feature type="chain" id="PRO_1000214487" description="DNA-directed RNA polymerase subunit beta">
    <location>
        <begin position="1"/>
        <end position="1373"/>
    </location>
</feature>
<reference key="1">
    <citation type="journal article" date="2009" name="PLoS ONE">
        <title>Genome sequence of the endosymbiont Rickettsia peacockii and comparison with virulent Rickettsia rickettsii: identification of virulence factors.</title>
        <authorList>
            <person name="Felsheim R.F."/>
            <person name="Kurtti T.J."/>
            <person name="Munderloh U.G."/>
        </authorList>
    </citation>
    <scope>NUCLEOTIDE SEQUENCE [LARGE SCALE GENOMIC DNA]</scope>
    <source>
        <strain>Rustic</strain>
    </source>
</reference>
<gene>
    <name evidence="1" type="primary">rpoB</name>
    <name type="ordered locus">RPR_03955</name>
</gene>
<evidence type="ECO:0000255" key="1">
    <source>
        <dbReference type="HAMAP-Rule" id="MF_01321"/>
    </source>
</evidence>